<gene>
    <name evidence="1" type="primary">rpsC</name>
    <name evidence="1" type="synonym">rps3</name>
    <name type="ordered locus">Npun_R4384</name>
</gene>
<name>RS3_NOSP7</name>
<accession>B2ITP9</accession>
<proteinExistence type="inferred from homology"/>
<keyword id="KW-1185">Reference proteome</keyword>
<keyword id="KW-0687">Ribonucleoprotein</keyword>
<keyword id="KW-0689">Ribosomal protein</keyword>
<keyword id="KW-0694">RNA-binding</keyword>
<keyword id="KW-0699">rRNA-binding</keyword>
<dbReference type="EMBL" id="CP001037">
    <property type="protein sequence ID" value="ACC82757.1"/>
    <property type="molecule type" value="Genomic_DNA"/>
</dbReference>
<dbReference type="RefSeq" id="WP_012410719.1">
    <property type="nucleotide sequence ID" value="NC_010628.1"/>
</dbReference>
<dbReference type="SMR" id="B2ITP9"/>
<dbReference type="STRING" id="63737.Npun_R4384"/>
<dbReference type="EnsemblBacteria" id="ACC82757">
    <property type="protein sequence ID" value="ACC82757"/>
    <property type="gene ID" value="Npun_R4384"/>
</dbReference>
<dbReference type="KEGG" id="npu:Npun_R4384"/>
<dbReference type="eggNOG" id="COG0092">
    <property type="taxonomic scope" value="Bacteria"/>
</dbReference>
<dbReference type="HOGENOM" id="CLU_058591_0_2_3"/>
<dbReference type="OrthoDB" id="9806396at2"/>
<dbReference type="PhylomeDB" id="B2ITP9"/>
<dbReference type="Proteomes" id="UP000001191">
    <property type="component" value="Chromosome"/>
</dbReference>
<dbReference type="GO" id="GO:0022627">
    <property type="term" value="C:cytosolic small ribosomal subunit"/>
    <property type="evidence" value="ECO:0007669"/>
    <property type="project" value="TreeGrafter"/>
</dbReference>
<dbReference type="GO" id="GO:0003729">
    <property type="term" value="F:mRNA binding"/>
    <property type="evidence" value="ECO:0007669"/>
    <property type="project" value="UniProtKB-UniRule"/>
</dbReference>
<dbReference type="GO" id="GO:0019843">
    <property type="term" value="F:rRNA binding"/>
    <property type="evidence" value="ECO:0007669"/>
    <property type="project" value="UniProtKB-UniRule"/>
</dbReference>
<dbReference type="GO" id="GO:0003735">
    <property type="term" value="F:structural constituent of ribosome"/>
    <property type="evidence" value="ECO:0007669"/>
    <property type="project" value="InterPro"/>
</dbReference>
<dbReference type="GO" id="GO:0006412">
    <property type="term" value="P:translation"/>
    <property type="evidence" value="ECO:0007669"/>
    <property type="project" value="UniProtKB-UniRule"/>
</dbReference>
<dbReference type="CDD" id="cd02412">
    <property type="entry name" value="KH-II_30S_S3"/>
    <property type="match status" value="1"/>
</dbReference>
<dbReference type="FunFam" id="3.30.300.20:FF:000001">
    <property type="entry name" value="30S ribosomal protein S3"/>
    <property type="match status" value="1"/>
</dbReference>
<dbReference type="Gene3D" id="3.30.300.20">
    <property type="match status" value="1"/>
</dbReference>
<dbReference type="Gene3D" id="3.30.1140.32">
    <property type="entry name" value="Ribosomal protein S3, C-terminal domain"/>
    <property type="match status" value="1"/>
</dbReference>
<dbReference type="HAMAP" id="MF_01309_B">
    <property type="entry name" value="Ribosomal_uS3_B"/>
    <property type="match status" value="1"/>
</dbReference>
<dbReference type="InterPro" id="IPR004087">
    <property type="entry name" value="KH_dom"/>
</dbReference>
<dbReference type="InterPro" id="IPR015946">
    <property type="entry name" value="KH_dom-like_a/b"/>
</dbReference>
<dbReference type="InterPro" id="IPR004044">
    <property type="entry name" value="KH_dom_type_2"/>
</dbReference>
<dbReference type="InterPro" id="IPR009019">
    <property type="entry name" value="KH_sf_prok-type"/>
</dbReference>
<dbReference type="InterPro" id="IPR036419">
    <property type="entry name" value="Ribosomal_S3_C_sf"/>
</dbReference>
<dbReference type="InterPro" id="IPR005704">
    <property type="entry name" value="Ribosomal_uS3_bac-typ"/>
</dbReference>
<dbReference type="InterPro" id="IPR001351">
    <property type="entry name" value="Ribosomal_uS3_C"/>
</dbReference>
<dbReference type="InterPro" id="IPR018280">
    <property type="entry name" value="Ribosomal_uS3_CS"/>
</dbReference>
<dbReference type="NCBIfam" id="TIGR01009">
    <property type="entry name" value="rpsC_bact"/>
    <property type="match status" value="1"/>
</dbReference>
<dbReference type="PANTHER" id="PTHR11760">
    <property type="entry name" value="30S/40S RIBOSOMAL PROTEIN S3"/>
    <property type="match status" value="1"/>
</dbReference>
<dbReference type="PANTHER" id="PTHR11760:SF19">
    <property type="entry name" value="SMALL RIBOSOMAL SUBUNIT PROTEIN US3C"/>
    <property type="match status" value="1"/>
</dbReference>
<dbReference type="Pfam" id="PF07650">
    <property type="entry name" value="KH_2"/>
    <property type="match status" value="1"/>
</dbReference>
<dbReference type="Pfam" id="PF00189">
    <property type="entry name" value="Ribosomal_S3_C"/>
    <property type="match status" value="1"/>
</dbReference>
<dbReference type="SMART" id="SM00322">
    <property type="entry name" value="KH"/>
    <property type="match status" value="1"/>
</dbReference>
<dbReference type="SUPFAM" id="SSF54814">
    <property type="entry name" value="Prokaryotic type KH domain (KH-domain type II)"/>
    <property type="match status" value="1"/>
</dbReference>
<dbReference type="SUPFAM" id="SSF54821">
    <property type="entry name" value="Ribosomal protein S3 C-terminal domain"/>
    <property type="match status" value="1"/>
</dbReference>
<dbReference type="PROSITE" id="PS50823">
    <property type="entry name" value="KH_TYPE_2"/>
    <property type="match status" value="1"/>
</dbReference>
<dbReference type="PROSITE" id="PS00548">
    <property type="entry name" value="RIBOSOMAL_S3"/>
    <property type="match status" value="1"/>
</dbReference>
<organism>
    <name type="scientific">Nostoc punctiforme (strain ATCC 29133 / PCC 73102)</name>
    <dbReference type="NCBI Taxonomy" id="63737"/>
    <lineage>
        <taxon>Bacteria</taxon>
        <taxon>Bacillati</taxon>
        <taxon>Cyanobacteriota</taxon>
        <taxon>Cyanophyceae</taxon>
        <taxon>Nostocales</taxon>
        <taxon>Nostocaceae</taxon>
        <taxon>Nostoc</taxon>
    </lineage>
</organism>
<sequence>MGQKIHPVGFRLGITHEHQSRWFAVPDRYPELLQEDYKLRQYIEQKLGRLAQNNAGISEVRIERKADQIDLEVRTARPGVVVGRGGQGIESLRTGLQGLLGSNRQIRINVVEVQRVDADAYLIAEYIAQQLERRVSFRRVVRQSIQRAQRAGVQGIKIQVSGRLNGAEIARTEWTREGRVPLHTLRADIDYSYCTAKTVYGILGIKVWVFKGEIIPGQEPDPLPPASRDRERDPRDRDREPRRRQQQRRRQQFEDRSNEG</sequence>
<evidence type="ECO:0000255" key="1">
    <source>
        <dbReference type="HAMAP-Rule" id="MF_01309"/>
    </source>
</evidence>
<evidence type="ECO:0000256" key="2">
    <source>
        <dbReference type="SAM" id="MobiDB-lite"/>
    </source>
</evidence>
<evidence type="ECO:0000305" key="3"/>
<protein>
    <recommendedName>
        <fullName evidence="1">Small ribosomal subunit protein uS3</fullName>
    </recommendedName>
    <alternativeName>
        <fullName evidence="3">30S ribosomal protein S3</fullName>
    </alternativeName>
</protein>
<comment type="function">
    <text evidence="1">Binds the lower part of the 30S subunit head. Binds mRNA in the 70S ribosome, positioning it for translation.</text>
</comment>
<comment type="subunit">
    <text evidence="1">Part of the 30S ribosomal subunit. Forms a tight complex with proteins S10 and S14.</text>
</comment>
<comment type="similarity">
    <text evidence="1">Belongs to the universal ribosomal protein uS3 family.</text>
</comment>
<feature type="chain" id="PRO_1000140995" description="Small ribosomal subunit protein uS3">
    <location>
        <begin position="1"/>
        <end position="260"/>
    </location>
</feature>
<feature type="domain" description="KH type-2" evidence="1">
    <location>
        <begin position="39"/>
        <end position="114"/>
    </location>
</feature>
<feature type="region of interest" description="Disordered" evidence="2">
    <location>
        <begin position="217"/>
        <end position="260"/>
    </location>
</feature>
<feature type="compositionally biased region" description="Basic and acidic residues" evidence="2">
    <location>
        <begin position="227"/>
        <end position="243"/>
    </location>
</feature>
<feature type="compositionally biased region" description="Basic and acidic residues" evidence="2">
    <location>
        <begin position="251"/>
        <end position="260"/>
    </location>
</feature>
<reference key="1">
    <citation type="journal article" date="2013" name="Plant Physiol.">
        <title>A Nostoc punctiforme Sugar Transporter Necessary to Establish a Cyanobacterium-Plant Symbiosis.</title>
        <authorList>
            <person name="Ekman M."/>
            <person name="Picossi S."/>
            <person name="Campbell E.L."/>
            <person name="Meeks J.C."/>
            <person name="Flores E."/>
        </authorList>
    </citation>
    <scope>NUCLEOTIDE SEQUENCE [LARGE SCALE GENOMIC DNA]</scope>
    <source>
        <strain>ATCC 29133 / PCC 73102</strain>
    </source>
</reference>